<keyword id="KW-0223">Dioxygenase</keyword>
<keyword id="KW-0408">Iron</keyword>
<keyword id="KW-0479">Metal-binding</keyword>
<keyword id="KW-0560">Oxidoreductase</keyword>
<proteinExistence type="evidence at protein level"/>
<protein>
    <recommendedName>
        <fullName evidence="7">Dioxygenase cdmA</fullName>
        <ecNumber evidence="6">1.14.11.-</ecNumber>
    </recommendedName>
    <alternativeName>
        <fullName evidence="7">Chrodrimanin B biosynthesis cluster protein A</fullName>
    </alternativeName>
</protein>
<sequence length="293" mass="32800">MTKLPSDASAIKRVEANTSPEQVIELLKQDGVVVLKDFLDQATVQSFREEIKPAIDDFEGGPNFNPDGVKVDIGRGTKHVANLTAISKTYRHDILNNKWMHSILEPLFRPHFGDYWMNRGSVLHIEPGEPAQNLHRDDILYRVTKLRQPGDPDLMINILIAVTEFRDDNGATRFVPGSHVWDDTRGVPTPDQASSAALRPGDALLFVGSLWHGAGSNQSDAFRQGLLLCIHPCHFTPMESHLHVPRTIVESMTPQAQKMIGWRSGITQHDVPIWLAGDHKMEETMGLRSQEVQ</sequence>
<gene>
    <name evidence="7" type="primary">cdmA</name>
</gene>
<reference key="1">
    <citation type="journal article" date="2018" name="Org. Lett.">
        <title>Elucidation and heterologous reconstitution of chrodrimanin B biosynthesis.</title>
        <authorList>
            <person name="Bai T."/>
            <person name="Quan Z."/>
            <person name="Zhai R."/>
            <person name="Awakawa T."/>
            <person name="Matsuda Y."/>
            <person name="Abe I."/>
        </authorList>
    </citation>
    <scope>NUCLEOTIDE SEQUENCE [GENOMIC DNA]</scope>
    <scope>FUNCTION</scope>
    <scope>CATALYTIC ACTIVITY</scope>
    <scope>PATHWAY</scope>
    <source>
        <strain>TPU1311</strain>
    </source>
</reference>
<reference key="2">
    <citation type="journal article" date="2015" name="Bioorg. Med. Chem. Lett.">
        <title>Verruculides A and B, two new protein tyrosine phosphatase 1B inhibitors from an Indonesian ascidian-derived Penicillium verruculosum.</title>
        <authorList>
            <person name="Yamazaki H."/>
            <person name="Nakayama W."/>
            <person name="Takahashi O."/>
            <person name="Kirikoshi R."/>
            <person name="Izumikawa Y."/>
            <person name="Iwasaki K."/>
            <person name="Toraiwa K."/>
            <person name="Ukai K."/>
            <person name="Rotinsulu H."/>
            <person name="Wewengkang D.S."/>
            <person name="Sumilat D.A."/>
            <person name="Mangindaan R.E."/>
            <person name="Namikoshi M."/>
        </authorList>
    </citation>
    <scope>BIOTECHNOLOGY</scope>
</reference>
<reference key="3">
    <citation type="journal article" date="2015" name="PLoS ONE">
        <title>Meroterpenoid Chrodrimanins Are Selective and Potent Blockers of Insect GABA-Gated Chloride Channels.</title>
        <authorList>
            <person name="Xu Y."/>
            <person name="Furutani S."/>
            <person name="Ihara M."/>
            <person name="Ling Y."/>
            <person name="Yang X."/>
            <person name="Kai K."/>
            <person name="Hayashi H."/>
            <person name="Matsuda K."/>
        </authorList>
    </citation>
    <scope>BIOTECHNOLOGY</scope>
</reference>
<comment type="function">
    <text evidence="6 9">Dioxygenase; part of the gene cluster that mediates the biosynthesis of chrodrimanin B, a meroterpenoid that acts as a potent blocker of insect GABA-gated chloride channels (PubMed:30417647). The first step of the pathway is the biosynthesis of 6-hydroxymellein by the polyketide synthase cdmE (PubMed:30417647). The prenyltransferase cdmH acts as a 6-hydroxymellein 5-farnesyltransferase and produces the hydrophobic metabolite verruculide C (PubMed:30417647). The FAD-dependent monooxygenase cdmI further converts verruculide C into verruculide B (PubMed:30417647). The terpene cyclase cdmG then produced the pentacyclic molecule 3-hydroxypentacecilide A, the backbone structure of chrodrimanin B, via folding the farnesyl moiety of the substrate into the chair-boat conformation (PubMed:30417647). The short-chain dehydrogenase/reductase cdmF functions as the 3-OH dehydrogenase that oxidizes the C-3 hydroxyl group of 3-hydroxypentacecilide A and produces chrodrimanin C, the dehydrogenated product of 3-hydroxypentacecilide A (PubMed:30417647). The cytochrome P450 monooxygenase cdmJ then accepts both 3-hydroxypentacecilide A and chrodrimanin C and functions as a C-7-beta-hydroxylase to produce respectively chrodrimanin H and chrodrimanin F (PubMed:30417647). The dioxygenase cdmA accepts chrodrimanin H to afford chrodrimanin E, which is further transformed to chrodrimanin A by the dioxygenase cdmD (PubMed:30417647). CdmA can also accept chrodrimanin C as substrate to convert it into verruculide A, which is further converted into chrodrimanin T by cdmD (PubMed:30417647). The last step of the biosynthesis is proposed to be performed by the acetyltransferase cdmC which acetylates chrodrimanin A to yield chrodrimanin B (Probable). The pathway may also lead to the production of additional shunt products, including chrodrimanins T and U (PubMed:30417647).</text>
</comment>
<comment type="catalytic activity">
    <reaction evidence="6">
        <text>chrodrimanin C + 2-oxoglutarate + O2 = verruculide A + succinate + CO2 + H2O</text>
        <dbReference type="Rhea" id="RHEA:65300"/>
        <dbReference type="ChEBI" id="CHEBI:15377"/>
        <dbReference type="ChEBI" id="CHEBI:15379"/>
        <dbReference type="ChEBI" id="CHEBI:16526"/>
        <dbReference type="ChEBI" id="CHEBI:16810"/>
        <dbReference type="ChEBI" id="CHEBI:30031"/>
        <dbReference type="ChEBI" id="CHEBI:156412"/>
        <dbReference type="ChEBI" id="CHEBI:156413"/>
    </reaction>
    <physiologicalReaction direction="left-to-right" evidence="6">
        <dbReference type="Rhea" id="RHEA:65301"/>
    </physiologicalReaction>
</comment>
<comment type="catalytic activity">
    <reaction evidence="6">
        <text>chrodrimanin H + 2-oxoglutarate + O2 = chrodrimanin E + succinate + CO2 + H2O</text>
        <dbReference type="Rhea" id="RHEA:65316"/>
        <dbReference type="ChEBI" id="CHEBI:15377"/>
        <dbReference type="ChEBI" id="CHEBI:15379"/>
        <dbReference type="ChEBI" id="CHEBI:16526"/>
        <dbReference type="ChEBI" id="CHEBI:16810"/>
        <dbReference type="ChEBI" id="CHEBI:30031"/>
        <dbReference type="ChEBI" id="CHEBI:156416"/>
        <dbReference type="ChEBI" id="CHEBI:156417"/>
    </reaction>
    <physiologicalReaction direction="left-to-right" evidence="6">
        <dbReference type="Rhea" id="RHEA:65317"/>
    </physiologicalReaction>
</comment>
<comment type="cofactor">
    <cofactor evidence="1">
        <name>Fe cation</name>
        <dbReference type="ChEBI" id="CHEBI:24875"/>
    </cofactor>
</comment>
<comment type="pathway">
    <text evidence="6">Secondary metabolite biosynthesis; terpenoid biosynthesis.</text>
</comment>
<comment type="subunit">
    <text evidence="3">Homodimer.</text>
</comment>
<comment type="biotechnology">
    <text evidence="4 5">Compounds in the chrodrimanin family such as chrodrimanin A or verruculide A exhibit strong inhibitory activities against protein tyrosine phosphatase 1B (PTP1B) and therefore, they could potentially be developed into drugs for the treatment of type 2 diabetes or obesity (PubMed:26115570). Furthermore, chrodrimanin B, the end product of the pathway involving chrodrimanin A or verruculide A, does not exhibit the PTP1B inhibitory activity, while it functions as a potent blocker of insect GABA-gated chloride channels (PubMed:25902139).</text>
</comment>
<comment type="similarity">
    <text evidence="8">Belongs to the PhyH family.</text>
</comment>
<accession>A0A3G9H185</accession>
<organism>
    <name type="scientific">Talaromyces verruculosus</name>
    <name type="common">Penicillium verruculosum</name>
    <dbReference type="NCBI Taxonomy" id="198730"/>
    <lineage>
        <taxon>Eukaryota</taxon>
        <taxon>Fungi</taxon>
        <taxon>Dikarya</taxon>
        <taxon>Ascomycota</taxon>
        <taxon>Pezizomycotina</taxon>
        <taxon>Eurotiomycetes</taxon>
        <taxon>Eurotiomycetidae</taxon>
        <taxon>Eurotiales</taxon>
        <taxon>Trichocomaceae</taxon>
        <taxon>Talaromyces</taxon>
        <taxon>Talaromyces sect. Talaromyces</taxon>
    </lineage>
</organism>
<feature type="chain" id="PRO_0000449126" description="Dioxygenase cdmA">
    <location>
        <begin position="1"/>
        <end position="293"/>
    </location>
</feature>
<feature type="binding site" evidence="2">
    <location>
        <position position="135"/>
    </location>
    <ligand>
        <name>Fe cation</name>
        <dbReference type="ChEBI" id="CHEBI:24875"/>
    </ligand>
</feature>
<feature type="binding site" evidence="2">
    <location>
        <position position="137"/>
    </location>
    <ligand>
        <name>Fe cation</name>
        <dbReference type="ChEBI" id="CHEBI:24875"/>
    </ligand>
</feature>
<feature type="binding site" evidence="2">
    <location>
        <position position="212"/>
    </location>
    <ligand>
        <name>Fe cation</name>
        <dbReference type="ChEBI" id="CHEBI:24875"/>
    </ligand>
</feature>
<evidence type="ECO:0000250" key="1">
    <source>
        <dbReference type="UniProtKB" id="A0A097ZPD9"/>
    </source>
</evidence>
<evidence type="ECO:0000250" key="2">
    <source>
        <dbReference type="UniProtKB" id="O14832"/>
    </source>
</evidence>
<evidence type="ECO:0000250" key="3">
    <source>
        <dbReference type="UniProtKB" id="Q4WAW9"/>
    </source>
</evidence>
<evidence type="ECO:0000269" key="4">
    <source>
    </source>
</evidence>
<evidence type="ECO:0000269" key="5">
    <source>
    </source>
</evidence>
<evidence type="ECO:0000269" key="6">
    <source>
    </source>
</evidence>
<evidence type="ECO:0000303" key="7">
    <source>
    </source>
</evidence>
<evidence type="ECO:0000305" key="8"/>
<evidence type="ECO:0000305" key="9">
    <source>
    </source>
</evidence>
<name>CDMA_TALVE</name>
<dbReference type="EC" id="1.14.11.-" evidence="6"/>
<dbReference type="EMBL" id="LC422696">
    <property type="protein sequence ID" value="BBG28480.1"/>
    <property type="molecule type" value="Genomic_DNA"/>
</dbReference>
<dbReference type="SMR" id="A0A3G9H185"/>
<dbReference type="UniPathway" id="UPA00213"/>
<dbReference type="GO" id="GO:0051213">
    <property type="term" value="F:dioxygenase activity"/>
    <property type="evidence" value="ECO:0007669"/>
    <property type="project" value="UniProtKB-KW"/>
</dbReference>
<dbReference type="GO" id="GO:0046872">
    <property type="term" value="F:metal ion binding"/>
    <property type="evidence" value="ECO:0007669"/>
    <property type="project" value="UniProtKB-KW"/>
</dbReference>
<dbReference type="GO" id="GO:0016114">
    <property type="term" value="P:terpenoid biosynthetic process"/>
    <property type="evidence" value="ECO:0007669"/>
    <property type="project" value="UniProtKB-UniPathway"/>
</dbReference>
<dbReference type="Gene3D" id="2.60.120.620">
    <property type="entry name" value="q2cbj1_9rhob like domain"/>
    <property type="match status" value="1"/>
</dbReference>
<dbReference type="InterPro" id="IPR008775">
    <property type="entry name" value="Phytyl_CoA_dOase-like"/>
</dbReference>
<dbReference type="PANTHER" id="PTHR20883:SF41">
    <property type="entry name" value="IRON_ALPHA-KETOGLUTARATE-DEPENDENT DIOXYGENASE ASQJ"/>
    <property type="match status" value="1"/>
</dbReference>
<dbReference type="PANTHER" id="PTHR20883">
    <property type="entry name" value="PHYTANOYL-COA DIOXYGENASE DOMAIN CONTAINING 1"/>
    <property type="match status" value="1"/>
</dbReference>
<dbReference type="Pfam" id="PF05721">
    <property type="entry name" value="PhyH"/>
    <property type="match status" value="1"/>
</dbReference>
<dbReference type="SUPFAM" id="SSF51197">
    <property type="entry name" value="Clavaminate synthase-like"/>
    <property type="match status" value="1"/>
</dbReference>